<reference key="1">
    <citation type="journal article" date="1995" name="Biol. Pharm. Bull.">
        <title>Primary structure of Ac1-proteinase from the venom of Deinagkistrodon acutus (hundred-pace snake) from Taiwan.</title>
        <authorList>
            <person name="Nikai T."/>
            <person name="Kato C."/>
            <person name="Komori Y."/>
            <person name="Nodani H."/>
            <person name="Homma M."/>
            <person name="Sugihara H."/>
        </authorList>
    </citation>
    <scope>PROTEIN SEQUENCE</scope>
    <source>
        <tissue>Venom</tissue>
    </source>
</reference>
<accession>Q7LZS9</accession>
<name>VM1A_DEIAC</name>
<proteinExistence type="evidence at protein level"/>
<feature type="chain" id="PRO_0000415607" description="Snake venom metalloproteinase Ac1">
    <location>
        <begin position="1"/>
        <end position="202"/>
    </location>
</feature>
<feature type="domain" description="Peptidase M12B" evidence="2">
    <location>
        <begin position="6"/>
        <end position="202"/>
    </location>
</feature>
<feature type="active site" evidence="2 3">
    <location>
        <position position="143"/>
    </location>
</feature>
<feature type="binding site" evidence="1">
    <location>
        <position position="9"/>
    </location>
    <ligand>
        <name>Ca(2+)</name>
        <dbReference type="ChEBI" id="CHEBI:29108"/>
    </ligand>
</feature>
<feature type="binding site" evidence="1">
    <location>
        <position position="93"/>
    </location>
    <ligand>
        <name>Ca(2+)</name>
        <dbReference type="ChEBI" id="CHEBI:29108"/>
    </ligand>
</feature>
<feature type="binding site" evidence="1">
    <location>
        <position position="142"/>
    </location>
    <ligand>
        <name>Zn(2+)</name>
        <dbReference type="ChEBI" id="CHEBI:29105"/>
        <note>catalytic</note>
    </ligand>
</feature>
<feature type="binding site" evidence="1">
    <location>
        <position position="146"/>
    </location>
    <ligand>
        <name>Zn(2+)</name>
        <dbReference type="ChEBI" id="CHEBI:29105"/>
        <note>catalytic</note>
    </ligand>
</feature>
<feature type="binding site" evidence="1">
    <location>
        <position position="152"/>
    </location>
    <ligand>
        <name>Zn(2+)</name>
        <dbReference type="ChEBI" id="CHEBI:29105"/>
        <note>catalytic</note>
    </ligand>
</feature>
<feature type="binding site" evidence="1">
    <location>
        <position position="197"/>
    </location>
    <ligand>
        <name>Ca(2+)</name>
        <dbReference type="ChEBI" id="CHEBI:29108"/>
    </ligand>
</feature>
<feature type="binding site" evidence="1">
    <location>
        <position position="200"/>
    </location>
    <ligand>
        <name>Ca(2+)</name>
        <dbReference type="ChEBI" id="CHEBI:29108"/>
    </ligand>
</feature>
<feature type="disulfide bond" evidence="2">
    <location>
        <begin position="117"/>
        <end position="197"/>
    </location>
</feature>
<feature type="disulfide bond" evidence="2">
    <location>
        <begin position="157"/>
        <end position="181"/>
    </location>
</feature>
<dbReference type="EC" id="3.4.24.-"/>
<dbReference type="PIR" id="JC2550">
    <property type="entry name" value="JC2550"/>
</dbReference>
<dbReference type="SMR" id="Q7LZS9"/>
<dbReference type="GO" id="GO:0005576">
    <property type="term" value="C:extracellular region"/>
    <property type="evidence" value="ECO:0007669"/>
    <property type="project" value="UniProtKB-SubCell"/>
</dbReference>
<dbReference type="GO" id="GO:0005886">
    <property type="term" value="C:plasma membrane"/>
    <property type="evidence" value="ECO:0007669"/>
    <property type="project" value="TreeGrafter"/>
</dbReference>
<dbReference type="GO" id="GO:0046872">
    <property type="term" value="F:metal ion binding"/>
    <property type="evidence" value="ECO:0007669"/>
    <property type="project" value="UniProtKB-KW"/>
</dbReference>
<dbReference type="GO" id="GO:0004222">
    <property type="term" value="F:metalloendopeptidase activity"/>
    <property type="evidence" value="ECO:0007669"/>
    <property type="project" value="InterPro"/>
</dbReference>
<dbReference type="GO" id="GO:0090729">
    <property type="term" value="F:toxin activity"/>
    <property type="evidence" value="ECO:0007669"/>
    <property type="project" value="UniProtKB-KW"/>
</dbReference>
<dbReference type="GO" id="GO:0006508">
    <property type="term" value="P:proteolysis"/>
    <property type="evidence" value="ECO:0007669"/>
    <property type="project" value="UniProtKB-KW"/>
</dbReference>
<dbReference type="CDD" id="cd04269">
    <property type="entry name" value="ZnMc_adamalysin_II_like"/>
    <property type="match status" value="1"/>
</dbReference>
<dbReference type="FunFam" id="3.40.390.10:FF:000002">
    <property type="entry name" value="Disintegrin and metalloproteinase domain-containing protein 22"/>
    <property type="match status" value="1"/>
</dbReference>
<dbReference type="Gene3D" id="3.40.390.10">
    <property type="entry name" value="Collagenase (Catalytic Domain)"/>
    <property type="match status" value="1"/>
</dbReference>
<dbReference type="InterPro" id="IPR024079">
    <property type="entry name" value="MetalloPept_cat_dom_sf"/>
</dbReference>
<dbReference type="InterPro" id="IPR001590">
    <property type="entry name" value="Peptidase_M12B"/>
</dbReference>
<dbReference type="InterPro" id="IPR034027">
    <property type="entry name" value="Reprolysin_adamalysin"/>
</dbReference>
<dbReference type="PANTHER" id="PTHR11905">
    <property type="entry name" value="ADAM A DISINTEGRIN AND METALLOPROTEASE DOMAIN"/>
    <property type="match status" value="1"/>
</dbReference>
<dbReference type="PANTHER" id="PTHR11905:SF32">
    <property type="entry name" value="DISINTEGRIN AND METALLOPROTEINASE DOMAIN-CONTAINING PROTEIN 28"/>
    <property type="match status" value="1"/>
</dbReference>
<dbReference type="Pfam" id="PF01421">
    <property type="entry name" value="Reprolysin"/>
    <property type="match status" value="1"/>
</dbReference>
<dbReference type="SUPFAM" id="SSF55486">
    <property type="entry name" value="Metalloproteases ('zincins'), catalytic domain"/>
    <property type="match status" value="1"/>
</dbReference>
<dbReference type="PROSITE" id="PS50215">
    <property type="entry name" value="ADAM_MEPRO"/>
    <property type="match status" value="1"/>
</dbReference>
<dbReference type="PROSITE" id="PS00142">
    <property type="entry name" value="ZINC_PROTEASE"/>
    <property type="match status" value="1"/>
</dbReference>
<organism>
    <name type="scientific">Deinagkistrodon acutus</name>
    <name type="common">Hundred-pace snake</name>
    <name type="synonym">Agkistrodon acutus</name>
    <dbReference type="NCBI Taxonomy" id="36307"/>
    <lineage>
        <taxon>Eukaryota</taxon>
        <taxon>Metazoa</taxon>
        <taxon>Chordata</taxon>
        <taxon>Craniata</taxon>
        <taxon>Vertebrata</taxon>
        <taxon>Euteleostomi</taxon>
        <taxon>Lepidosauria</taxon>
        <taxon>Squamata</taxon>
        <taxon>Bifurcata</taxon>
        <taxon>Unidentata</taxon>
        <taxon>Episquamata</taxon>
        <taxon>Toxicofera</taxon>
        <taxon>Serpentes</taxon>
        <taxon>Colubroidea</taxon>
        <taxon>Viperidae</taxon>
        <taxon>Crotalinae</taxon>
        <taxon>Deinagkistrodon</taxon>
    </lineage>
</organism>
<sequence>STEFQRYMEIVIVVDHSMVKKYNGDSPKIKAWVYEMINTITEGYRDLYIDIILSGLEIWSEKDLINVEASAGNTLKSFGEWRAKDLIHRISHDNAQLLTATDFDGPTIGLAYVASMCEPKLSVGVIQDHSSVNRLVAITLAHEMAHNLGVRHDEKDCVGVVYLCIMRIPVVEDKRSYFSDCSYIQCREYISKENPPCILNKP</sequence>
<keyword id="KW-0903">Direct protein sequencing</keyword>
<keyword id="KW-1015">Disulfide bond</keyword>
<keyword id="KW-1199">Hemostasis impairing toxin</keyword>
<keyword id="KW-0378">Hydrolase</keyword>
<keyword id="KW-0479">Metal-binding</keyword>
<keyword id="KW-0482">Metalloprotease</keyword>
<keyword id="KW-0645">Protease</keyword>
<keyword id="KW-0964">Secreted</keyword>
<keyword id="KW-0800">Toxin</keyword>
<keyword id="KW-0862">Zinc</keyword>
<evidence type="ECO:0000250" key="1"/>
<evidence type="ECO:0000255" key="2">
    <source>
        <dbReference type="PROSITE-ProRule" id="PRU00276"/>
    </source>
</evidence>
<evidence type="ECO:0000255" key="3">
    <source>
        <dbReference type="PROSITE-ProRule" id="PRU10095"/>
    </source>
</evidence>
<evidence type="ECO:0000305" key="4"/>
<comment type="function">
    <text evidence="1">Snake venom metalloproteinase that impairs hemostasis in the envenomed animal.</text>
</comment>
<comment type="cofactor">
    <cofactor evidence="1">
        <name>Zn(2+)</name>
        <dbReference type="ChEBI" id="CHEBI:29105"/>
    </cofactor>
    <text evidence="1">Binds 1 zinc ion per subunit.</text>
</comment>
<comment type="subunit">
    <text evidence="1">Monomer.</text>
</comment>
<comment type="subcellular location">
    <subcellularLocation>
        <location>Secreted</location>
    </subcellularLocation>
</comment>
<comment type="tissue specificity">
    <text>Expressed by the venom gland.</text>
</comment>
<comment type="similarity">
    <text evidence="4">Belongs to the venom metalloproteinase (M12B) family. P-I subfamily.</text>
</comment>
<comment type="caution">
    <text evidence="4">Lacks a Cys at position 158 preventing the formation of a third disulfide bond.</text>
</comment>
<protein>
    <recommendedName>
        <fullName>Snake venom metalloproteinase Ac1</fullName>
        <shortName>SVMP</shortName>
        <ecNumber>3.4.24.-</ecNumber>
    </recommendedName>
    <alternativeName>
        <fullName>Ac1-proteinase</fullName>
    </alternativeName>
</protein>